<comment type="function">
    <text evidence="1">Plays an important role in the de novo pathway and in the salvage pathway of purine nucleotide biosynthesis. Catalyzes the first committed step in the biosynthesis of AMP from IMP (By similarity).</text>
</comment>
<comment type="catalytic activity">
    <reaction evidence="2">
        <text>IMP + L-aspartate + GTP = N(6)-(1,2-dicarboxyethyl)-AMP + GDP + phosphate + 2 H(+)</text>
        <dbReference type="Rhea" id="RHEA:15753"/>
        <dbReference type="ChEBI" id="CHEBI:15378"/>
        <dbReference type="ChEBI" id="CHEBI:29991"/>
        <dbReference type="ChEBI" id="CHEBI:37565"/>
        <dbReference type="ChEBI" id="CHEBI:43474"/>
        <dbReference type="ChEBI" id="CHEBI:57567"/>
        <dbReference type="ChEBI" id="CHEBI:58053"/>
        <dbReference type="ChEBI" id="CHEBI:58189"/>
        <dbReference type="EC" id="6.3.4.4"/>
    </reaction>
</comment>
<comment type="cofactor">
    <cofactor evidence="2">
        <name>Mg(2+)</name>
        <dbReference type="ChEBI" id="CHEBI:18420"/>
    </cofactor>
    <text evidence="2">Binds 1 Mg(2+) ion per subunit.</text>
</comment>
<comment type="pathway">
    <text evidence="2">Purine metabolism; AMP biosynthesis via de novo pathway; AMP from IMP: step 1/2.</text>
</comment>
<comment type="subunit">
    <text evidence="2">Homodimer.</text>
</comment>
<comment type="subcellular location">
    <subcellularLocation>
        <location evidence="2">Cytoplasm</location>
    </subcellularLocation>
</comment>
<comment type="similarity">
    <text evidence="2">Belongs to the adenylosuccinate synthetase family.</text>
</comment>
<accession>Q4P7R2</accession>
<accession>A0A0D1E0M7</accession>
<gene>
    <name type="ORF">UMAG_03851</name>
</gene>
<dbReference type="EC" id="6.3.4.4" evidence="2"/>
<dbReference type="EMBL" id="CM003149">
    <property type="protein sequence ID" value="KIS68270.1"/>
    <property type="molecule type" value="Genomic_DNA"/>
</dbReference>
<dbReference type="RefSeq" id="XP_011390281.1">
    <property type="nucleotide sequence ID" value="XM_011391979.1"/>
</dbReference>
<dbReference type="SMR" id="Q4P7R2"/>
<dbReference type="FunCoup" id="Q4P7R2">
    <property type="interactions" value="512"/>
</dbReference>
<dbReference type="STRING" id="237631.Q4P7R2"/>
<dbReference type="EnsemblFungi" id="KIS68270">
    <property type="protein sequence ID" value="KIS68270"/>
    <property type="gene ID" value="UMAG_03851"/>
</dbReference>
<dbReference type="GeneID" id="23564196"/>
<dbReference type="KEGG" id="uma:UMAG_03851"/>
<dbReference type="VEuPathDB" id="FungiDB:UMAG_03851"/>
<dbReference type="eggNOG" id="KOG1355">
    <property type="taxonomic scope" value="Eukaryota"/>
</dbReference>
<dbReference type="HOGENOM" id="CLU_029848_0_0_1"/>
<dbReference type="InParanoid" id="Q4P7R2"/>
<dbReference type="OMA" id="FHHAKPI"/>
<dbReference type="OrthoDB" id="10265645at2759"/>
<dbReference type="UniPathway" id="UPA00075">
    <property type="reaction ID" value="UER00335"/>
</dbReference>
<dbReference type="Proteomes" id="UP000000561">
    <property type="component" value="Chromosome 10"/>
</dbReference>
<dbReference type="GO" id="GO:0005737">
    <property type="term" value="C:cytoplasm"/>
    <property type="evidence" value="ECO:0000318"/>
    <property type="project" value="GO_Central"/>
</dbReference>
<dbReference type="GO" id="GO:0004019">
    <property type="term" value="F:adenylosuccinate synthase activity"/>
    <property type="evidence" value="ECO:0000318"/>
    <property type="project" value="GO_Central"/>
</dbReference>
<dbReference type="GO" id="GO:0016208">
    <property type="term" value="F:AMP binding"/>
    <property type="evidence" value="ECO:0007669"/>
    <property type="project" value="EnsemblFungi"/>
</dbReference>
<dbReference type="GO" id="GO:0003688">
    <property type="term" value="F:DNA replication origin binding"/>
    <property type="evidence" value="ECO:0007669"/>
    <property type="project" value="EnsemblFungi"/>
</dbReference>
<dbReference type="GO" id="GO:0019002">
    <property type="term" value="F:GMP binding"/>
    <property type="evidence" value="ECO:0007669"/>
    <property type="project" value="EnsemblFungi"/>
</dbReference>
<dbReference type="GO" id="GO:0005525">
    <property type="term" value="F:GTP binding"/>
    <property type="evidence" value="ECO:0007669"/>
    <property type="project" value="UniProtKB-UniRule"/>
</dbReference>
<dbReference type="GO" id="GO:0000287">
    <property type="term" value="F:magnesium ion binding"/>
    <property type="evidence" value="ECO:0007669"/>
    <property type="project" value="UniProtKB-UniRule"/>
</dbReference>
<dbReference type="GO" id="GO:0044208">
    <property type="term" value="P:'de novo' AMP biosynthetic process"/>
    <property type="evidence" value="ECO:0000318"/>
    <property type="project" value="GO_Central"/>
</dbReference>
<dbReference type="GO" id="GO:0071276">
    <property type="term" value="P:cellular response to cadmium ion"/>
    <property type="evidence" value="ECO:0007669"/>
    <property type="project" value="EnsemblFungi"/>
</dbReference>
<dbReference type="GO" id="GO:0046040">
    <property type="term" value="P:IMP metabolic process"/>
    <property type="evidence" value="ECO:0000318"/>
    <property type="project" value="GO_Central"/>
</dbReference>
<dbReference type="CDD" id="cd03108">
    <property type="entry name" value="AdSS"/>
    <property type="match status" value="1"/>
</dbReference>
<dbReference type="FunFam" id="3.90.170.10:FF:000001">
    <property type="entry name" value="Adenylosuccinate synthetase"/>
    <property type="match status" value="1"/>
</dbReference>
<dbReference type="FunFam" id="1.10.300.10:FF:000002">
    <property type="entry name" value="Adenylosuccinate synthetase, chloroplastic"/>
    <property type="match status" value="1"/>
</dbReference>
<dbReference type="Gene3D" id="3.40.440.10">
    <property type="entry name" value="Adenylosuccinate Synthetase, subunit A, domain 1"/>
    <property type="match status" value="1"/>
</dbReference>
<dbReference type="Gene3D" id="1.10.300.10">
    <property type="entry name" value="Adenylosuccinate Synthetase, subunit A, domain 2"/>
    <property type="match status" value="1"/>
</dbReference>
<dbReference type="Gene3D" id="3.90.170.10">
    <property type="entry name" value="Adenylosuccinate Synthetase, subunit A, domain 3"/>
    <property type="match status" value="1"/>
</dbReference>
<dbReference type="HAMAP" id="MF_00011">
    <property type="entry name" value="Adenylosucc_synth"/>
    <property type="match status" value="1"/>
</dbReference>
<dbReference type="InterPro" id="IPR018220">
    <property type="entry name" value="Adenylosuccin_syn_GTP-bd"/>
</dbReference>
<dbReference type="InterPro" id="IPR033128">
    <property type="entry name" value="Adenylosuccin_syn_Lys_AS"/>
</dbReference>
<dbReference type="InterPro" id="IPR042109">
    <property type="entry name" value="Adenylosuccinate_synth_dom1"/>
</dbReference>
<dbReference type="InterPro" id="IPR042110">
    <property type="entry name" value="Adenylosuccinate_synth_dom2"/>
</dbReference>
<dbReference type="InterPro" id="IPR042111">
    <property type="entry name" value="Adenylosuccinate_synth_dom3"/>
</dbReference>
<dbReference type="InterPro" id="IPR001114">
    <property type="entry name" value="Adenylosuccinate_synthetase"/>
</dbReference>
<dbReference type="InterPro" id="IPR027417">
    <property type="entry name" value="P-loop_NTPase"/>
</dbReference>
<dbReference type="NCBIfam" id="NF002223">
    <property type="entry name" value="PRK01117.1"/>
    <property type="match status" value="1"/>
</dbReference>
<dbReference type="NCBIfam" id="TIGR00184">
    <property type="entry name" value="purA"/>
    <property type="match status" value="1"/>
</dbReference>
<dbReference type="PANTHER" id="PTHR11846">
    <property type="entry name" value="ADENYLOSUCCINATE SYNTHETASE"/>
    <property type="match status" value="1"/>
</dbReference>
<dbReference type="PANTHER" id="PTHR11846:SF0">
    <property type="entry name" value="ADENYLOSUCCINATE SYNTHETASE"/>
    <property type="match status" value="1"/>
</dbReference>
<dbReference type="Pfam" id="PF00709">
    <property type="entry name" value="Adenylsucc_synt"/>
    <property type="match status" value="1"/>
</dbReference>
<dbReference type="SMART" id="SM00788">
    <property type="entry name" value="Adenylsucc_synt"/>
    <property type="match status" value="1"/>
</dbReference>
<dbReference type="SUPFAM" id="SSF52540">
    <property type="entry name" value="P-loop containing nucleoside triphosphate hydrolases"/>
    <property type="match status" value="1"/>
</dbReference>
<dbReference type="PROSITE" id="PS01266">
    <property type="entry name" value="ADENYLOSUCCIN_SYN_1"/>
    <property type="match status" value="1"/>
</dbReference>
<dbReference type="PROSITE" id="PS00513">
    <property type="entry name" value="ADENYLOSUCCIN_SYN_2"/>
    <property type="match status" value="1"/>
</dbReference>
<organism>
    <name type="scientific">Mycosarcoma maydis</name>
    <name type="common">Corn smut fungus</name>
    <name type="synonym">Ustilago maydis</name>
    <dbReference type="NCBI Taxonomy" id="5270"/>
    <lineage>
        <taxon>Eukaryota</taxon>
        <taxon>Fungi</taxon>
        <taxon>Dikarya</taxon>
        <taxon>Basidiomycota</taxon>
        <taxon>Ustilaginomycotina</taxon>
        <taxon>Ustilaginomycetes</taxon>
        <taxon>Ustilaginales</taxon>
        <taxon>Ustilaginaceae</taxon>
        <taxon>Mycosarcoma</taxon>
    </lineage>
</organism>
<sequence>MAAMPKPSDSKTGGKATVLLGSQWGDEGKGKLADVLSGQMDVCARCAGGNNAGHTIVADVNGVKTKFDFHLLPSGLVNPRCAGFIGSGVVVHVPSFFAELDTIQKKGLNCDGRLFISDRAHLVFDFHQVVDGLKEVELGGSSIGTTKKGIGPAYSSKASRSGLRVHHLYDPELFATKFRKLVEGRFKRYGHFEYDTEGEIARYRAFAERLRPHIVDGVTFIHTALAQNRKVLVEGANALFLDIDFGTYPFVTSSSTSIGGVLTGLGIPPTAIGDVIGVMKAYTTRVGMGPFPTELHEEIGHHLQEVGAEYGVTTGRRRRCGWLDLVMMRYSCLINGYTSLNLTKLDVLDQLKEIKICVGYVVDGKELPSFPADLEVLAKVEVQYKTLPGWQQDISKTTTWEELPENCRNYVDFIEQFLGVKIEWIGVGPARESMIHRAG</sequence>
<protein>
    <recommendedName>
        <fullName evidence="2">Adenylosuccinate synthetase</fullName>
        <shortName evidence="2">AMPSase</shortName>
        <shortName evidence="2">AdSS</shortName>
        <ecNumber evidence="2">6.3.4.4</ecNumber>
    </recommendedName>
    <alternativeName>
        <fullName evidence="2">IMP--aspartate ligase</fullName>
    </alternativeName>
</protein>
<proteinExistence type="inferred from homology"/>
<feature type="chain" id="PRO_0000399368" description="Adenylosuccinate synthetase">
    <location>
        <begin position="1"/>
        <end position="439"/>
    </location>
</feature>
<feature type="active site" description="Proton acceptor" evidence="2">
    <location>
        <position position="26"/>
    </location>
</feature>
<feature type="active site" description="Proton donor" evidence="2">
    <location>
        <position position="54"/>
    </location>
</feature>
<feature type="binding site" evidence="2">
    <location>
        <begin position="25"/>
        <end position="31"/>
    </location>
    <ligand>
        <name>GTP</name>
        <dbReference type="ChEBI" id="CHEBI:37565"/>
    </ligand>
</feature>
<feature type="binding site" description="in other chain" evidence="2">
    <location>
        <begin position="26"/>
        <end position="29"/>
    </location>
    <ligand>
        <name>IMP</name>
        <dbReference type="ChEBI" id="CHEBI:58053"/>
        <note>ligand shared between dimeric partners</note>
    </ligand>
</feature>
<feature type="binding site" evidence="2">
    <location>
        <position position="26"/>
    </location>
    <ligand>
        <name>Mg(2+)</name>
        <dbReference type="ChEBI" id="CHEBI:18420"/>
    </ligand>
</feature>
<feature type="binding site" description="in other chain" evidence="2">
    <location>
        <begin position="51"/>
        <end position="54"/>
    </location>
    <ligand>
        <name>IMP</name>
        <dbReference type="ChEBI" id="CHEBI:58053"/>
        <note>ligand shared between dimeric partners</note>
    </ligand>
</feature>
<feature type="binding site" evidence="2">
    <location>
        <begin position="53"/>
        <end position="55"/>
    </location>
    <ligand>
        <name>GTP</name>
        <dbReference type="ChEBI" id="CHEBI:37565"/>
    </ligand>
</feature>
<feature type="binding site" evidence="2">
    <location>
        <position position="53"/>
    </location>
    <ligand>
        <name>Mg(2+)</name>
        <dbReference type="ChEBI" id="CHEBI:18420"/>
    </ligand>
</feature>
<feature type="binding site" description="in other chain" evidence="2">
    <location>
        <position position="146"/>
    </location>
    <ligand>
        <name>IMP</name>
        <dbReference type="ChEBI" id="CHEBI:58053"/>
        <note>ligand shared between dimeric partners</note>
    </ligand>
</feature>
<feature type="binding site" evidence="2">
    <location>
        <position position="160"/>
    </location>
    <ligand>
        <name>IMP</name>
        <dbReference type="ChEBI" id="CHEBI:58053"/>
        <note>ligand shared between dimeric partners</note>
    </ligand>
</feature>
<feature type="binding site" description="in other chain" evidence="2">
    <location>
        <position position="237"/>
    </location>
    <ligand>
        <name>IMP</name>
        <dbReference type="ChEBI" id="CHEBI:58053"/>
        <note>ligand shared between dimeric partners</note>
    </ligand>
</feature>
<feature type="binding site" description="in other chain" evidence="2">
    <location>
        <position position="252"/>
    </location>
    <ligand>
        <name>IMP</name>
        <dbReference type="ChEBI" id="CHEBI:58053"/>
        <note>ligand shared between dimeric partners</note>
    </ligand>
</feature>
<feature type="binding site" evidence="2">
    <location>
        <begin position="312"/>
        <end position="318"/>
    </location>
    <ligand>
        <name>substrate</name>
    </ligand>
</feature>
<feature type="binding site" description="in other chain" evidence="2">
    <location>
        <position position="316"/>
    </location>
    <ligand>
        <name>IMP</name>
        <dbReference type="ChEBI" id="CHEBI:58053"/>
        <note>ligand shared between dimeric partners</note>
    </ligand>
</feature>
<feature type="binding site" evidence="2">
    <location>
        <position position="318"/>
    </location>
    <ligand>
        <name>GTP</name>
        <dbReference type="ChEBI" id="CHEBI:37565"/>
    </ligand>
</feature>
<feature type="binding site" evidence="2">
    <location>
        <begin position="344"/>
        <end position="346"/>
    </location>
    <ligand>
        <name>GTP</name>
        <dbReference type="ChEBI" id="CHEBI:37565"/>
    </ligand>
</feature>
<feature type="binding site" evidence="2">
    <location>
        <begin position="426"/>
        <end position="428"/>
    </location>
    <ligand>
        <name>GTP</name>
        <dbReference type="ChEBI" id="CHEBI:37565"/>
    </ligand>
</feature>
<keyword id="KW-0963">Cytoplasm</keyword>
<keyword id="KW-0342">GTP-binding</keyword>
<keyword id="KW-0436">Ligase</keyword>
<keyword id="KW-0460">Magnesium</keyword>
<keyword id="KW-0479">Metal-binding</keyword>
<keyword id="KW-0547">Nucleotide-binding</keyword>
<keyword id="KW-0658">Purine biosynthesis</keyword>
<keyword id="KW-1185">Reference proteome</keyword>
<reference key="1">
    <citation type="journal article" date="2006" name="Nature">
        <title>Insights from the genome of the biotrophic fungal plant pathogen Ustilago maydis.</title>
        <authorList>
            <person name="Kaemper J."/>
            <person name="Kahmann R."/>
            <person name="Boelker M."/>
            <person name="Ma L.-J."/>
            <person name="Brefort T."/>
            <person name="Saville B.J."/>
            <person name="Banuett F."/>
            <person name="Kronstad J.W."/>
            <person name="Gold S.E."/>
            <person name="Mueller O."/>
            <person name="Perlin M.H."/>
            <person name="Woesten H.A.B."/>
            <person name="de Vries R."/>
            <person name="Ruiz-Herrera J."/>
            <person name="Reynaga-Pena C.G."/>
            <person name="Snetselaar K."/>
            <person name="McCann M."/>
            <person name="Perez-Martin J."/>
            <person name="Feldbruegge M."/>
            <person name="Basse C.W."/>
            <person name="Steinberg G."/>
            <person name="Ibeas J.I."/>
            <person name="Holloman W."/>
            <person name="Guzman P."/>
            <person name="Farman M.L."/>
            <person name="Stajich J.E."/>
            <person name="Sentandreu R."/>
            <person name="Gonzalez-Prieto J.M."/>
            <person name="Kennell J.C."/>
            <person name="Molina L."/>
            <person name="Schirawski J."/>
            <person name="Mendoza-Mendoza A."/>
            <person name="Greilinger D."/>
            <person name="Muench K."/>
            <person name="Roessel N."/>
            <person name="Scherer M."/>
            <person name="Vranes M."/>
            <person name="Ladendorf O."/>
            <person name="Vincon V."/>
            <person name="Fuchs U."/>
            <person name="Sandrock B."/>
            <person name="Meng S."/>
            <person name="Ho E.C.H."/>
            <person name="Cahill M.J."/>
            <person name="Boyce K.J."/>
            <person name="Klose J."/>
            <person name="Klosterman S.J."/>
            <person name="Deelstra H.J."/>
            <person name="Ortiz-Castellanos L."/>
            <person name="Li W."/>
            <person name="Sanchez-Alonso P."/>
            <person name="Schreier P.H."/>
            <person name="Haeuser-Hahn I."/>
            <person name="Vaupel M."/>
            <person name="Koopmann E."/>
            <person name="Friedrich G."/>
            <person name="Voss H."/>
            <person name="Schlueter T."/>
            <person name="Margolis J."/>
            <person name="Platt D."/>
            <person name="Swimmer C."/>
            <person name="Gnirke A."/>
            <person name="Chen F."/>
            <person name="Vysotskaia V."/>
            <person name="Mannhaupt G."/>
            <person name="Gueldener U."/>
            <person name="Muensterkoetter M."/>
            <person name="Haase D."/>
            <person name="Oesterheld M."/>
            <person name="Mewes H.-W."/>
            <person name="Mauceli E.W."/>
            <person name="DeCaprio D."/>
            <person name="Wade C.M."/>
            <person name="Butler J."/>
            <person name="Young S.K."/>
            <person name="Jaffe D.B."/>
            <person name="Calvo S.E."/>
            <person name="Nusbaum C."/>
            <person name="Galagan J.E."/>
            <person name="Birren B.W."/>
        </authorList>
    </citation>
    <scope>NUCLEOTIDE SEQUENCE [LARGE SCALE GENOMIC DNA]</scope>
    <source>
        <strain>DSM 14603 / FGSC 9021 / UM521</strain>
    </source>
</reference>
<reference key="2">
    <citation type="submission" date="2014-09" db="EMBL/GenBank/DDBJ databases">
        <authorList>
            <person name="Gueldener U."/>
            <person name="Muensterkoetter M."/>
            <person name="Walter M.C."/>
            <person name="Mannhaupt G."/>
            <person name="Kahmann R."/>
        </authorList>
    </citation>
    <scope>GENOME REANNOTATION</scope>
    <source>
        <strain>DSM 14603 / FGSC 9021 / UM521</strain>
    </source>
</reference>
<evidence type="ECO:0000250" key="1"/>
<evidence type="ECO:0000255" key="2">
    <source>
        <dbReference type="HAMAP-Rule" id="MF_03125"/>
    </source>
</evidence>
<name>PURA_MYCMD</name>